<proteinExistence type="inferred from homology"/>
<reference key="1">
    <citation type="journal article" date="2011" name="Stand. Genomic Sci.">
        <title>Complete genome sequence of the halophilic and highly halotolerant Chromohalobacter salexigens type strain (1H11(T)).</title>
        <authorList>
            <person name="Copeland A."/>
            <person name="O'Connor K."/>
            <person name="Lucas S."/>
            <person name="Lapidus A."/>
            <person name="Berry K.W."/>
            <person name="Detter J.C."/>
            <person name="Del Rio T.G."/>
            <person name="Hammon N."/>
            <person name="Dalin E."/>
            <person name="Tice H."/>
            <person name="Pitluck S."/>
            <person name="Bruce D."/>
            <person name="Goodwin L."/>
            <person name="Han C."/>
            <person name="Tapia R."/>
            <person name="Saunders E."/>
            <person name="Schmutz J."/>
            <person name="Brettin T."/>
            <person name="Larimer F."/>
            <person name="Land M."/>
            <person name="Hauser L."/>
            <person name="Vargas C."/>
            <person name="Nieto J.J."/>
            <person name="Kyrpides N.C."/>
            <person name="Ivanova N."/>
            <person name="Goker M."/>
            <person name="Klenk H.P."/>
            <person name="Csonka L.N."/>
            <person name="Woyke T."/>
        </authorList>
    </citation>
    <scope>NUCLEOTIDE SEQUENCE [LARGE SCALE GENOMIC DNA]</scope>
    <source>
        <strain>ATCC BAA-138 / DSM 3043 / CIP 106854 / NCIMB 13768 / 1H11</strain>
    </source>
</reference>
<name>SYM_CHRSD</name>
<dbReference type="EC" id="6.1.1.10" evidence="1"/>
<dbReference type="EMBL" id="CP000285">
    <property type="protein sequence ID" value="ABE59471.1"/>
    <property type="molecule type" value="Genomic_DNA"/>
</dbReference>
<dbReference type="RefSeq" id="WP_011507417.1">
    <property type="nucleotide sequence ID" value="NC_007963.1"/>
</dbReference>
<dbReference type="SMR" id="Q1QVN7"/>
<dbReference type="STRING" id="290398.Csal_2120"/>
<dbReference type="GeneID" id="95334837"/>
<dbReference type="KEGG" id="csa:Csal_2120"/>
<dbReference type="eggNOG" id="COG0073">
    <property type="taxonomic scope" value="Bacteria"/>
</dbReference>
<dbReference type="eggNOG" id="COG0143">
    <property type="taxonomic scope" value="Bacteria"/>
</dbReference>
<dbReference type="HOGENOM" id="CLU_009710_7_0_6"/>
<dbReference type="OrthoDB" id="9810191at2"/>
<dbReference type="Proteomes" id="UP000000239">
    <property type="component" value="Chromosome"/>
</dbReference>
<dbReference type="GO" id="GO:0005829">
    <property type="term" value="C:cytosol"/>
    <property type="evidence" value="ECO:0007669"/>
    <property type="project" value="TreeGrafter"/>
</dbReference>
<dbReference type="GO" id="GO:0005524">
    <property type="term" value="F:ATP binding"/>
    <property type="evidence" value="ECO:0007669"/>
    <property type="project" value="UniProtKB-UniRule"/>
</dbReference>
<dbReference type="GO" id="GO:0046872">
    <property type="term" value="F:metal ion binding"/>
    <property type="evidence" value="ECO:0007669"/>
    <property type="project" value="UniProtKB-KW"/>
</dbReference>
<dbReference type="GO" id="GO:0004825">
    <property type="term" value="F:methionine-tRNA ligase activity"/>
    <property type="evidence" value="ECO:0007669"/>
    <property type="project" value="UniProtKB-UniRule"/>
</dbReference>
<dbReference type="GO" id="GO:0000049">
    <property type="term" value="F:tRNA binding"/>
    <property type="evidence" value="ECO:0007669"/>
    <property type="project" value="UniProtKB-KW"/>
</dbReference>
<dbReference type="GO" id="GO:0006431">
    <property type="term" value="P:methionyl-tRNA aminoacylation"/>
    <property type="evidence" value="ECO:0007669"/>
    <property type="project" value="UniProtKB-UniRule"/>
</dbReference>
<dbReference type="CDD" id="cd07957">
    <property type="entry name" value="Anticodon_Ia_Met"/>
    <property type="match status" value="1"/>
</dbReference>
<dbReference type="CDD" id="cd00814">
    <property type="entry name" value="MetRS_core"/>
    <property type="match status" value="1"/>
</dbReference>
<dbReference type="CDD" id="cd02800">
    <property type="entry name" value="tRNA_bind_EcMetRS_like"/>
    <property type="match status" value="1"/>
</dbReference>
<dbReference type="FunFam" id="1.10.730.10:FF:000005">
    <property type="entry name" value="Methionine--tRNA ligase"/>
    <property type="match status" value="1"/>
</dbReference>
<dbReference type="FunFam" id="2.20.28.20:FF:000001">
    <property type="entry name" value="Methionine--tRNA ligase"/>
    <property type="match status" value="1"/>
</dbReference>
<dbReference type="FunFam" id="2.40.50.140:FF:000042">
    <property type="entry name" value="Methionine--tRNA ligase"/>
    <property type="match status" value="1"/>
</dbReference>
<dbReference type="Gene3D" id="3.40.50.620">
    <property type="entry name" value="HUPs"/>
    <property type="match status" value="1"/>
</dbReference>
<dbReference type="Gene3D" id="1.10.730.10">
    <property type="entry name" value="Isoleucyl-tRNA Synthetase, Domain 1"/>
    <property type="match status" value="1"/>
</dbReference>
<dbReference type="Gene3D" id="2.20.28.20">
    <property type="entry name" value="Methionyl-tRNA synthetase, Zn-domain"/>
    <property type="match status" value="1"/>
</dbReference>
<dbReference type="Gene3D" id="2.40.50.140">
    <property type="entry name" value="Nucleic acid-binding proteins"/>
    <property type="match status" value="1"/>
</dbReference>
<dbReference type="HAMAP" id="MF_00098">
    <property type="entry name" value="Met_tRNA_synth_type1"/>
    <property type="match status" value="1"/>
</dbReference>
<dbReference type="InterPro" id="IPR001412">
    <property type="entry name" value="aa-tRNA-synth_I_CS"/>
</dbReference>
<dbReference type="InterPro" id="IPR041872">
    <property type="entry name" value="Anticodon_Met"/>
</dbReference>
<dbReference type="InterPro" id="IPR004495">
    <property type="entry name" value="Met-tRNA-synth_bsu_C"/>
</dbReference>
<dbReference type="InterPro" id="IPR023458">
    <property type="entry name" value="Met-tRNA_ligase_1"/>
</dbReference>
<dbReference type="InterPro" id="IPR014758">
    <property type="entry name" value="Met-tRNA_synth"/>
</dbReference>
<dbReference type="InterPro" id="IPR015413">
    <property type="entry name" value="Methionyl/Leucyl_tRNA_Synth"/>
</dbReference>
<dbReference type="InterPro" id="IPR033911">
    <property type="entry name" value="MetRS_core"/>
</dbReference>
<dbReference type="InterPro" id="IPR029038">
    <property type="entry name" value="MetRS_Zn"/>
</dbReference>
<dbReference type="InterPro" id="IPR012340">
    <property type="entry name" value="NA-bd_OB-fold"/>
</dbReference>
<dbReference type="InterPro" id="IPR014729">
    <property type="entry name" value="Rossmann-like_a/b/a_fold"/>
</dbReference>
<dbReference type="InterPro" id="IPR002547">
    <property type="entry name" value="tRNA-bd_dom"/>
</dbReference>
<dbReference type="InterPro" id="IPR009080">
    <property type="entry name" value="tRNAsynth_Ia_anticodon-bd"/>
</dbReference>
<dbReference type="NCBIfam" id="TIGR00398">
    <property type="entry name" value="metG"/>
    <property type="match status" value="1"/>
</dbReference>
<dbReference type="NCBIfam" id="TIGR00399">
    <property type="entry name" value="metG_C_term"/>
    <property type="match status" value="1"/>
</dbReference>
<dbReference type="NCBIfam" id="NF001100">
    <property type="entry name" value="PRK00133.1"/>
    <property type="match status" value="1"/>
</dbReference>
<dbReference type="PANTHER" id="PTHR45765">
    <property type="entry name" value="METHIONINE--TRNA LIGASE"/>
    <property type="match status" value="1"/>
</dbReference>
<dbReference type="PANTHER" id="PTHR45765:SF1">
    <property type="entry name" value="METHIONINE--TRNA LIGASE, CYTOPLASMIC"/>
    <property type="match status" value="1"/>
</dbReference>
<dbReference type="Pfam" id="PF19303">
    <property type="entry name" value="Anticodon_3"/>
    <property type="match status" value="1"/>
</dbReference>
<dbReference type="Pfam" id="PF09334">
    <property type="entry name" value="tRNA-synt_1g"/>
    <property type="match status" value="1"/>
</dbReference>
<dbReference type="Pfam" id="PF01588">
    <property type="entry name" value="tRNA_bind"/>
    <property type="match status" value="1"/>
</dbReference>
<dbReference type="PRINTS" id="PR01041">
    <property type="entry name" value="TRNASYNTHMET"/>
</dbReference>
<dbReference type="SUPFAM" id="SSF47323">
    <property type="entry name" value="Anticodon-binding domain of a subclass of class I aminoacyl-tRNA synthetases"/>
    <property type="match status" value="1"/>
</dbReference>
<dbReference type="SUPFAM" id="SSF57770">
    <property type="entry name" value="Methionyl-tRNA synthetase (MetRS), Zn-domain"/>
    <property type="match status" value="1"/>
</dbReference>
<dbReference type="SUPFAM" id="SSF50249">
    <property type="entry name" value="Nucleic acid-binding proteins"/>
    <property type="match status" value="1"/>
</dbReference>
<dbReference type="SUPFAM" id="SSF52374">
    <property type="entry name" value="Nucleotidylyl transferase"/>
    <property type="match status" value="1"/>
</dbReference>
<dbReference type="PROSITE" id="PS00178">
    <property type="entry name" value="AA_TRNA_LIGASE_I"/>
    <property type="match status" value="1"/>
</dbReference>
<dbReference type="PROSITE" id="PS50886">
    <property type="entry name" value="TRBD"/>
    <property type="match status" value="1"/>
</dbReference>
<evidence type="ECO:0000255" key="1">
    <source>
        <dbReference type="HAMAP-Rule" id="MF_00098"/>
    </source>
</evidence>
<organism>
    <name type="scientific">Chromohalobacter salexigens (strain ATCC BAA-138 / DSM 3043 / CIP 106854 / NCIMB 13768 / 1H11)</name>
    <dbReference type="NCBI Taxonomy" id="290398"/>
    <lineage>
        <taxon>Bacteria</taxon>
        <taxon>Pseudomonadati</taxon>
        <taxon>Pseudomonadota</taxon>
        <taxon>Gammaproteobacteria</taxon>
        <taxon>Oceanospirillales</taxon>
        <taxon>Halomonadaceae</taxon>
        <taxon>Chromohalobacter</taxon>
    </lineage>
</organism>
<comment type="function">
    <text evidence="1">Is required not only for elongation of protein synthesis but also for the initiation of all mRNA translation through initiator tRNA(fMet) aminoacylation.</text>
</comment>
<comment type="catalytic activity">
    <reaction evidence="1">
        <text>tRNA(Met) + L-methionine + ATP = L-methionyl-tRNA(Met) + AMP + diphosphate</text>
        <dbReference type="Rhea" id="RHEA:13481"/>
        <dbReference type="Rhea" id="RHEA-COMP:9667"/>
        <dbReference type="Rhea" id="RHEA-COMP:9698"/>
        <dbReference type="ChEBI" id="CHEBI:30616"/>
        <dbReference type="ChEBI" id="CHEBI:33019"/>
        <dbReference type="ChEBI" id="CHEBI:57844"/>
        <dbReference type="ChEBI" id="CHEBI:78442"/>
        <dbReference type="ChEBI" id="CHEBI:78530"/>
        <dbReference type="ChEBI" id="CHEBI:456215"/>
        <dbReference type="EC" id="6.1.1.10"/>
    </reaction>
</comment>
<comment type="cofactor">
    <cofactor evidence="1">
        <name>Zn(2+)</name>
        <dbReference type="ChEBI" id="CHEBI:29105"/>
    </cofactor>
    <text evidence="1">Binds 1 zinc ion per subunit.</text>
</comment>
<comment type="subunit">
    <text evidence="1">Homodimer.</text>
</comment>
<comment type="subcellular location">
    <subcellularLocation>
        <location evidence="1">Cytoplasm</location>
    </subcellularLocation>
</comment>
<comment type="similarity">
    <text evidence="1">Belongs to the class-I aminoacyl-tRNA synthetase family. MetG type 1 subfamily.</text>
</comment>
<accession>Q1QVN7</accession>
<sequence length="681" mass="75913">MPTTANAKRKILVTSALPYANGSIHLGHLLEYIQTDIWVRFQKSRGHECHYVCADDAHGTAIMLRAEQEGITPEQLISKVSAEHQADFARFGVAFDNYYSTHSEENRQHSERIYTALRDAGHISTRDIEQMYDPVKGLFLADRFIKGTCPKCGAGDQYGDNCEACGATYTPAELIDPVSAISGATPEVRSSTHFFFKLPDFADFMQGWIDGGHVQPQIRNKLLEWFESGFNEWDISRDAPYFGFEIPDAPGKYFYVWLDAPIGYLASFQNLCEREGIDFDSYWRRDSDAEVYHFIGKDIVYFHALFWPAMLEGAGLRTPTGVNCHGFVTVNGAKMSKSRGTFIKAQTYAEYLNPEYLRYYFAAKLTAGVDDLDLNLEDFASRVNADLVGKVVNIASRCAGFVKKLGAGRLAAHCAEPELVTRFVEAGEAIAADYEAREFARAMRKVMDLADEANAYIADKAPWVLAKEEGREQEVLDICSVGINLFRILMVYLQPVVPAMAEQARDFLQIESLDWESRRTLLEDHAIAKFKPLMTRVDTDKIASMTEASKEVLAEEQKLKEQAKGPLADDPIADEIGFDDFAKLDLRIVRIAKAEYVEGAKKLLKLTLDLGGETRTVFSGIRAVYAPEALEGRLTVMVANLAPRKMRFGVSEGMVLAAGDKEGGIYLLSPDNGAEPGQRVS</sequence>
<keyword id="KW-0030">Aminoacyl-tRNA synthetase</keyword>
<keyword id="KW-0067">ATP-binding</keyword>
<keyword id="KW-0963">Cytoplasm</keyword>
<keyword id="KW-0436">Ligase</keyword>
<keyword id="KW-0479">Metal-binding</keyword>
<keyword id="KW-0547">Nucleotide-binding</keyword>
<keyword id="KW-0648">Protein biosynthesis</keyword>
<keyword id="KW-1185">Reference proteome</keyword>
<keyword id="KW-0694">RNA-binding</keyword>
<keyword id="KW-0820">tRNA-binding</keyword>
<keyword id="KW-0862">Zinc</keyword>
<feature type="chain" id="PRO_0000331804" description="Methionine--tRNA ligase">
    <location>
        <begin position="1"/>
        <end position="681"/>
    </location>
</feature>
<feature type="domain" description="tRNA-binding" evidence="1">
    <location>
        <begin position="580"/>
        <end position="681"/>
    </location>
</feature>
<feature type="short sequence motif" description="'HIGH' region">
    <location>
        <begin position="18"/>
        <end position="28"/>
    </location>
</feature>
<feature type="short sequence motif" description="'KMSKS' region">
    <location>
        <begin position="334"/>
        <end position="338"/>
    </location>
</feature>
<feature type="binding site" evidence="1">
    <location>
        <position position="149"/>
    </location>
    <ligand>
        <name>Zn(2+)</name>
        <dbReference type="ChEBI" id="CHEBI:29105"/>
    </ligand>
</feature>
<feature type="binding site" evidence="1">
    <location>
        <position position="152"/>
    </location>
    <ligand>
        <name>Zn(2+)</name>
        <dbReference type="ChEBI" id="CHEBI:29105"/>
    </ligand>
</feature>
<feature type="binding site" evidence="1">
    <location>
        <position position="162"/>
    </location>
    <ligand>
        <name>Zn(2+)</name>
        <dbReference type="ChEBI" id="CHEBI:29105"/>
    </ligand>
</feature>
<feature type="binding site" evidence="1">
    <location>
        <position position="165"/>
    </location>
    <ligand>
        <name>Zn(2+)</name>
        <dbReference type="ChEBI" id="CHEBI:29105"/>
    </ligand>
</feature>
<feature type="binding site" evidence="1">
    <location>
        <position position="337"/>
    </location>
    <ligand>
        <name>ATP</name>
        <dbReference type="ChEBI" id="CHEBI:30616"/>
    </ligand>
</feature>
<gene>
    <name evidence="1" type="primary">metG</name>
    <name type="ordered locus">Csal_2120</name>
</gene>
<protein>
    <recommendedName>
        <fullName evidence="1">Methionine--tRNA ligase</fullName>
        <ecNumber evidence="1">6.1.1.10</ecNumber>
    </recommendedName>
    <alternativeName>
        <fullName evidence="1">Methionyl-tRNA synthetase</fullName>
        <shortName evidence="1">MetRS</shortName>
    </alternativeName>
</protein>